<reference evidence="2" key="1">
    <citation type="submission" date="2005-09" db="EMBL/GenBank/DDBJ databases">
        <title>Annotation of the Aspergillus terreus NIH2624 genome.</title>
        <authorList>
            <person name="Birren B.W."/>
            <person name="Lander E.S."/>
            <person name="Galagan J.E."/>
            <person name="Nusbaum C."/>
            <person name="Devon K."/>
            <person name="Henn M."/>
            <person name="Ma L.-J."/>
            <person name="Jaffe D.B."/>
            <person name="Butler J."/>
            <person name="Alvarez P."/>
            <person name="Gnerre S."/>
            <person name="Grabherr M."/>
            <person name="Kleber M."/>
            <person name="Mauceli E.W."/>
            <person name="Brockman W."/>
            <person name="Rounsley S."/>
            <person name="Young S.K."/>
            <person name="LaButti K."/>
            <person name="Pushparaj V."/>
            <person name="DeCaprio D."/>
            <person name="Crawford M."/>
            <person name="Koehrsen M."/>
            <person name="Engels R."/>
            <person name="Montgomery P."/>
            <person name="Pearson M."/>
            <person name="Howarth C."/>
            <person name="Larson L."/>
            <person name="Luoma S."/>
            <person name="White J."/>
            <person name="Alvarado L."/>
            <person name="Kodira C.D."/>
            <person name="Zeng Q."/>
            <person name="Oleary S."/>
            <person name="Yandava C."/>
            <person name="Denning D.W."/>
            <person name="Nierman W.C."/>
            <person name="Milne T."/>
            <person name="Madden K."/>
        </authorList>
    </citation>
    <scope>NUCLEOTIDE SEQUENCE [LARGE SCALE GENOMIC DNA]</scope>
    <source>
        <strain>NIH 2624 / FGSC A1156</strain>
    </source>
</reference>
<protein>
    <recommendedName>
        <fullName evidence="1">NADPH--cytochrome P450 reductase</fullName>
        <shortName evidence="1">CPR</shortName>
        <shortName evidence="1">P450R</shortName>
        <ecNumber evidence="1">1.6.2.4</ecNumber>
    </recommendedName>
</protein>
<name>NCPR_ASPTN</name>
<organism>
    <name type="scientific">Aspergillus terreus (strain NIH 2624 / FGSC A1156)</name>
    <dbReference type="NCBI Taxonomy" id="341663"/>
    <lineage>
        <taxon>Eukaryota</taxon>
        <taxon>Fungi</taxon>
        <taxon>Dikarya</taxon>
        <taxon>Ascomycota</taxon>
        <taxon>Pezizomycotina</taxon>
        <taxon>Eurotiomycetes</taxon>
        <taxon>Eurotiomycetidae</taxon>
        <taxon>Eurotiales</taxon>
        <taxon>Aspergillaceae</taxon>
        <taxon>Aspergillus</taxon>
        <taxon>Aspergillus subgen. Circumdati</taxon>
    </lineage>
</organism>
<accession>Q0CMM0</accession>
<dbReference type="EC" id="1.6.2.4" evidence="1"/>
<dbReference type="EMBL" id="CH476600">
    <property type="protein sequence ID" value="EAU34133.1"/>
    <property type="molecule type" value="Genomic_DNA"/>
</dbReference>
<dbReference type="RefSeq" id="XP_001214242.1">
    <property type="nucleotide sequence ID" value="XM_001214242.1"/>
</dbReference>
<dbReference type="SMR" id="Q0CMM0"/>
<dbReference type="STRING" id="341663.Q0CMM0"/>
<dbReference type="EnsemblFungi" id="EAU34133">
    <property type="protein sequence ID" value="EAU34133"/>
    <property type="gene ID" value="ATEG_05064"/>
</dbReference>
<dbReference type="GeneID" id="4321140"/>
<dbReference type="VEuPathDB" id="FungiDB:ATEG_05064"/>
<dbReference type="eggNOG" id="KOG1158">
    <property type="taxonomic scope" value="Eukaryota"/>
</dbReference>
<dbReference type="HOGENOM" id="CLU_001570_17_3_1"/>
<dbReference type="OMA" id="QKRYQRD"/>
<dbReference type="OrthoDB" id="1856718at2759"/>
<dbReference type="Proteomes" id="UP000007963">
    <property type="component" value="Unassembled WGS sequence"/>
</dbReference>
<dbReference type="GO" id="GO:0005829">
    <property type="term" value="C:cytosol"/>
    <property type="evidence" value="ECO:0007669"/>
    <property type="project" value="TreeGrafter"/>
</dbReference>
<dbReference type="GO" id="GO:0005789">
    <property type="term" value="C:endoplasmic reticulum membrane"/>
    <property type="evidence" value="ECO:0007669"/>
    <property type="project" value="UniProtKB-SubCell"/>
</dbReference>
<dbReference type="GO" id="GO:0005741">
    <property type="term" value="C:mitochondrial outer membrane"/>
    <property type="evidence" value="ECO:0007669"/>
    <property type="project" value="UniProtKB-SubCell"/>
</dbReference>
<dbReference type="GO" id="GO:0005886">
    <property type="term" value="C:plasma membrane"/>
    <property type="evidence" value="ECO:0007669"/>
    <property type="project" value="UniProtKB-SubCell"/>
</dbReference>
<dbReference type="GO" id="GO:0050660">
    <property type="term" value="F:flavin adenine dinucleotide binding"/>
    <property type="evidence" value="ECO:0007669"/>
    <property type="project" value="UniProtKB-UniRule"/>
</dbReference>
<dbReference type="GO" id="GO:0010181">
    <property type="term" value="F:FMN binding"/>
    <property type="evidence" value="ECO:0007669"/>
    <property type="project" value="UniProtKB-UniRule"/>
</dbReference>
<dbReference type="GO" id="GO:0050661">
    <property type="term" value="F:NADP binding"/>
    <property type="evidence" value="ECO:0007669"/>
    <property type="project" value="UniProtKB-UniRule"/>
</dbReference>
<dbReference type="GO" id="GO:0003958">
    <property type="term" value="F:NADPH-hemoprotein reductase activity"/>
    <property type="evidence" value="ECO:0007669"/>
    <property type="project" value="UniProtKB-UniRule"/>
</dbReference>
<dbReference type="GO" id="GO:0006696">
    <property type="term" value="P:ergosterol biosynthetic process"/>
    <property type="evidence" value="ECO:0007669"/>
    <property type="project" value="UniProtKB-UniRule"/>
</dbReference>
<dbReference type="CDD" id="cd06204">
    <property type="entry name" value="CYPOR"/>
    <property type="match status" value="1"/>
</dbReference>
<dbReference type="FunFam" id="1.20.990.10:FF:000009">
    <property type="entry name" value="NADPH--cytochrome P450 reductase"/>
    <property type="match status" value="1"/>
</dbReference>
<dbReference type="FunFam" id="2.40.30.10:FF:000100">
    <property type="entry name" value="NADPH--cytochrome P450 reductase"/>
    <property type="match status" value="1"/>
</dbReference>
<dbReference type="FunFam" id="2.40.30.10:FF:000111">
    <property type="entry name" value="NADPH--cytochrome P450 reductase"/>
    <property type="match status" value="1"/>
</dbReference>
<dbReference type="FunFam" id="3.40.50.360:FF:000024">
    <property type="entry name" value="NADPH--cytochrome P450 reductase"/>
    <property type="match status" value="1"/>
</dbReference>
<dbReference type="FunFam" id="3.40.50.80:FF:000001">
    <property type="entry name" value="NADPH--cytochrome P450 reductase 1"/>
    <property type="match status" value="1"/>
</dbReference>
<dbReference type="Gene3D" id="3.40.50.360">
    <property type="match status" value="1"/>
</dbReference>
<dbReference type="Gene3D" id="1.20.990.10">
    <property type="entry name" value="NADPH-cytochrome p450 Reductase, Chain A, domain 3"/>
    <property type="match status" value="1"/>
</dbReference>
<dbReference type="Gene3D" id="3.40.50.80">
    <property type="entry name" value="Nucleotide-binding domain of ferredoxin-NADP reductase (FNR) module"/>
    <property type="match status" value="1"/>
</dbReference>
<dbReference type="Gene3D" id="2.40.30.10">
    <property type="entry name" value="Translation factors"/>
    <property type="match status" value="1"/>
</dbReference>
<dbReference type="HAMAP" id="MF_03212">
    <property type="entry name" value="NCPR"/>
    <property type="match status" value="1"/>
</dbReference>
<dbReference type="InterPro" id="IPR003097">
    <property type="entry name" value="CysJ-like_FAD-binding"/>
</dbReference>
<dbReference type="InterPro" id="IPR017927">
    <property type="entry name" value="FAD-bd_FR_type"/>
</dbReference>
<dbReference type="InterPro" id="IPR001094">
    <property type="entry name" value="Flavdoxin-like"/>
</dbReference>
<dbReference type="InterPro" id="IPR008254">
    <property type="entry name" value="Flavodoxin/NO_synth"/>
</dbReference>
<dbReference type="InterPro" id="IPR001709">
    <property type="entry name" value="Flavoprot_Pyr_Nucl_cyt_Rdtase"/>
</dbReference>
<dbReference type="InterPro" id="IPR029039">
    <property type="entry name" value="Flavoprotein-like_sf"/>
</dbReference>
<dbReference type="InterPro" id="IPR039261">
    <property type="entry name" value="FNR_nucleotide-bd"/>
</dbReference>
<dbReference type="InterPro" id="IPR023173">
    <property type="entry name" value="NADPH_Cyt_P450_Rdtase_alpha"/>
</dbReference>
<dbReference type="InterPro" id="IPR001433">
    <property type="entry name" value="OxRdtase_FAD/NAD-bd"/>
</dbReference>
<dbReference type="InterPro" id="IPR023208">
    <property type="entry name" value="P450R"/>
</dbReference>
<dbReference type="InterPro" id="IPR017938">
    <property type="entry name" value="Riboflavin_synthase-like_b-brl"/>
</dbReference>
<dbReference type="PANTHER" id="PTHR19384:SF17">
    <property type="entry name" value="NADPH--CYTOCHROME P450 REDUCTASE"/>
    <property type="match status" value="1"/>
</dbReference>
<dbReference type="PANTHER" id="PTHR19384">
    <property type="entry name" value="NITRIC OXIDE SYNTHASE-RELATED"/>
    <property type="match status" value="1"/>
</dbReference>
<dbReference type="Pfam" id="PF00667">
    <property type="entry name" value="FAD_binding_1"/>
    <property type="match status" value="1"/>
</dbReference>
<dbReference type="Pfam" id="PF00258">
    <property type="entry name" value="Flavodoxin_1"/>
    <property type="match status" value="1"/>
</dbReference>
<dbReference type="Pfam" id="PF00175">
    <property type="entry name" value="NAD_binding_1"/>
    <property type="match status" value="1"/>
</dbReference>
<dbReference type="PIRSF" id="PIRSF000208">
    <property type="entry name" value="P450R"/>
    <property type="match status" value="1"/>
</dbReference>
<dbReference type="PRINTS" id="PR00369">
    <property type="entry name" value="FLAVODOXIN"/>
</dbReference>
<dbReference type="PRINTS" id="PR00371">
    <property type="entry name" value="FPNCR"/>
</dbReference>
<dbReference type="SUPFAM" id="SSF52343">
    <property type="entry name" value="Ferredoxin reductase-like, C-terminal NADP-linked domain"/>
    <property type="match status" value="1"/>
</dbReference>
<dbReference type="SUPFAM" id="SSF52218">
    <property type="entry name" value="Flavoproteins"/>
    <property type="match status" value="1"/>
</dbReference>
<dbReference type="SUPFAM" id="SSF63380">
    <property type="entry name" value="Riboflavin synthase domain-like"/>
    <property type="match status" value="1"/>
</dbReference>
<dbReference type="PROSITE" id="PS51384">
    <property type="entry name" value="FAD_FR"/>
    <property type="match status" value="1"/>
</dbReference>
<dbReference type="PROSITE" id="PS50902">
    <property type="entry name" value="FLAVODOXIN_LIKE"/>
    <property type="match status" value="1"/>
</dbReference>
<evidence type="ECO:0000255" key="1">
    <source>
        <dbReference type="HAMAP-Rule" id="MF_03212"/>
    </source>
</evidence>
<evidence type="ECO:0000312" key="2">
    <source>
        <dbReference type="EMBL" id="EAU34133.1"/>
    </source>
</evidence>
<feature type="chain" id="PRO_0000404331" description="NADPH--cytochrome P450 reductase">
    <location>
        <begin position="1"/>
        <end position="695"/>
    </location>
</feature>
<feature type="topological domain" description="Lumenal" evidence="1">
    <location>
        <begin position="1"/>
        <end position="8"/>
    </location>
</feature>
<feature type="transmembrane region" description="Helical" evidence="1">
    <location>
        <begin position="9"/>
        <end position="31"/>
    </location>
</feature>
<feature type="topological domain" description="Cytoplasmic" evidence="1">
    <location>
        <begin position="32"/>
        <end position="695"/>
    </location>
</feature>
<feature type="domain" description="Flavodoxin-like" evidence="1">
    <location>
        <begin position="66"/>
        <end position="221"/>
    </location>
</feature>
<feature type="domain" description="FAD-binding FR-type" evidence="1">
    <location>
        <begin position="277"/>
        <end position="538"/>
    </location>
</feature>
<feature type="binding site" evidence="1">
    <location>
        <begin position="72"/>
        <end position="77"/>
    </location>
    <ligand>
        <name>FMN</name>
        <dbReference type="ChEBI" id="CHEBI:58210"/>
    </ligand>
</feature>
<feature type="binding site" evidence="1">
    <location>
        <begin position="123"/>
        <end position="126"/>
    </location>
    <ligand>
        <name>FMN</name>
        <dbReference type="ChEBI" id="CHEBI:58210"/>
    </ligand>
</feature>
<feature type="binding site" evidence="1">
    <location>
        <begin position="169"/>
        <end position="178"/>
    </location>
    <ligand>
        <name>FMN</name>
        <dbReference type="ChEBI" id="CHEBI:58210"/>
    </ligand>
</feature>
<feature type="binding site" evidence="1">
    <location>
        <position position="204"/>
    </location>
    <ligand>
        <name>FMN</name>
        <dbReference type="ChEBI" id="CHEBI:58210"/>
    </ligand>
</feature>
<feature type="binding site" evidence="1">
    <location>
        <position position="296"/>
    </location>
    <ligand>
        <name>NADP(+)</name>
        <dbReference type="ChEBI" id="CHEBI:58349"/>
    </ligand>
</feature>
<feature type="binding site" evidence="1">
    <location>
        <begin position="451"/>
        <end position="454"/>
    </location>
    <ligand>
        <name>FAD</name>
        <dbReference type="ChEBI" id="CHEBI:57692"/>
    </ligand>
</feature>
<feature type="binding site" evidence="1">
    <location>
        <begin position="469"/>
        <end position="471"/>
    </location>
    <ligand>
        <name>FAD</name>
        <dbReference type="ChEBI" id="CHEBI:57692"/>
    </ligand>
</feature>
<feature type="binding site" evidence="1">
    <location>
        <begin position="486"/>
        <end position="489"/>
    </location>
    <ligand>
        <name>FAD</name>
        <dbReference type="ChEBI" id="CHEBI:57692"/>
    </ligand>
</feature>
<feature type="binding site" evidence="1">
    <location>
        <position position="552"/>
    </location>
    <ligand>
        <name>NADP(+)</name>
        <dbReference type="ChEBI" id="CHEBI:58349"/>
    </ligand>
</feature>
<feature type="binding site" evidence="1">
    <location>
        <begin position="614"/>
        <end position="615"/>
    </location>
    <ligand>
        <name>NADP(+)</name>
        <dbReference type="ChEBI" id="CHEBI:58349"/>
    </ligand>
</feature>
<feature type="binding site" evidence="1">
    <location>
        <begin position="620"/>
        <end position="624"/>
    </location>
    <ligand>
        <name>NADP(+)</name>
        <dbReference type="ChEBI" id="CHEBI:58349"/>
    </ligand>
</feature>
<feature type="binding site" evidence="1">
    <location>
        <position position="656"/>
    </location>
    <ligand>
        <name>NADP(+)</name>
        <dbReference type="ChEBI" id="CHEBI:58349"/>
    </ligand>
</feature>
<feature type="binding site" evidence="1">
    <location>
        <position position="694"/>
    </location>
    <ligand>
        <name>FAD</name>
        <dbReference type="ChEBI" id="CHEBI:57692"/>
    </ligand>
</feature>
<proteinExistence type="inferred from homology"/>
<keyword id="KW-1003">Cell membrane</keyword>
<keyword id="KW-0256">Endoplasmic reticulum</keyword>
<keyword id="KW-0274">FAD</keyword>
<keyword id="KW-0285">Flavoprotein</keyword>
<keyword id="KW-0288">FMN</keyword>
<keyword id="KW-0444">Lipid biosynthesis</keyword>
<keyword id="KW-0443">Lipid metabolism</keyword>
<keyword id="KW-0472">Membrane</keyword>
<keyword id="KW-0496">Mitochondrion</keyword>
<keyword id="KW-1000">Mitochondrion outer membrane</keyword>
<keyword id="KW-0521">NADP</keyword>
<keyword id="KW-0560">Oxidoreductase</keyword>
<keyword id="KW-1185">Reference proteome</keyword>
<keyword id="KW-0752">Steroid biosynthesis</keyword>
<keyword id="KW-0753">Steroid metabolism</keyword>
<keyword id="KW-0756">Sterol biosynthesis</keyword>
<keyword id="KW-1207">Sterol metabolism</keyword>
<keyword id="KW-0812">Transmembrane</keyword>
<keyword id="KW-1133">Transmembrane helix</keyword>
<sequence length="695" mass="76664">MAQLDTLDLVVLVVLLVGSAAYFTKGTYWAVPKDPYAASGPAMNGGAKAGKSRDIIEKMEETGKNCVIFYGSQTGTAEDYASRLAKEGSQRFGLKTMVADLEDYDYENLDKFPEDKVAFFVMATYGEGEPTDNAVEFYQFISGEDVAFESGASADDKPLSSLKYVTFGLGNNTYEHYQAMVRNLDAALTKLGAQRIGDAGEGDDGAGTMEEDFLAWKEPMWTALSEAMNLQEREAVYEPVFSVTEDESLSPEDEAVYLGEPTKGHRDGTPSGPYSAHNPFIAPIVESRELFNVKDRNCLHMEISIAGSNLSYQTGDHIAIWPTNAGAEVDRFLQVFGLENKRHSVINIKGIDVTAKVPIPTPTTYDAAVRYYMEIAAPVSRQFVATLAAFAPDEETKAEIVRLGSDKDYFHEKISNQCFTIAQALQSVTSKPFSAVPFSLLIEGLNKLQPRYYSISSSSMVQKDKISITAVVESTRLPGAAHLVKGVTTNYLLALKQKQNGDPSPDPHGLTYTITGPRNKYDGIHVPVHVRHSNFKLPSDPSRPIIMVGPGTGVAPFRGFIQERAALAAKGENVGPTVLFFGCRRRDEDFMYADEFKTYQEQLGDKLQIITAFSRETSQKVYVQHRLREHSDLVSSLLKQKANFYVCGDAANMAREVNLVLGQIIAQQRGLPAERAEEMVKHMRSSGSYQEDVWS</sequence>
<gene>
    <name evidence="1" type="primary">cprA</name>
    <name type="ORF">ATEG_05064</name>
</gene>
<comment type="function">
    <text evidence="1">This enzyme is required for electron transfer from NADP to cytochrome P450 in microsomes. It can also provide electron transfer to heme oxygenase and cytochrome B5. Involved in ergosterol biosynthesis.</text>
</comment>
<comment type="catalytic activity">
    <reaction evidence="1">
        <text>2 oxidized [cytochrome P450] + NADPH = 2 reduced [cytochrome P450] + NADP(+) + H(+)</text>
        <dbReference type="Rhea" id="RHEA:24040"/>
        <dbReference type="Rhea" id="RHEA-COMP:14627"/>
        <dbReference type="Rhea" id="RHEA-COMP:14628"/>
        <dbReference type="ChEBI" id="CHEBI:15378"/>
        <dbReference type="ChEBI" id="CHEBI:55376"/>
        <dbReference type="ChEBI" id="CHEBI:57783"/>
        <dbReference type="ChEBI" id="CHEBI:58349"/>
        <dbReference type="ChEBI" id="CHEBI:60344"/>
        <dbReference type="EC" id="1.6.2.4"/>
    </reaction>
</comment>
<comment type="cofactor">
    <cofactor evidence="1">
        <name>FAD</name>
        <dbReference type="ChEBI" id="CHEBI:57692"/>
    </cofactor>
    <text evidence="1">Binds 1 FAD per monomer.</text>
</comment>
<comment type="cofactor">
    <cofactor evidence="1">
        <name>FMN</name>
        <dbReference type="ChEBI" id="CHEBI:58210"/>
    </cofactor>
    <text evidence="1">Binds 1 FMN per monomer.</text>
</comment>
<comment type="subcellular location">
    <subcellularLocation>
        <location evidence="1">Endoplasmic reticulum membrane</location>
        <topology evidence="1">Single-pass membrane protein</topology>
        <orientation evidence="1">Cytoplasmic side</orientation>
    </subcellularLocation>
    <subcellularLocation>
        <location evidence="1">Mitochondrion outer membrane</location>
        <topology evidence="1">Single-pass membrane protein</topology>
        <orientation evidence="1">Cytoplasmic side</orientation>
    </subcellularLocation>
    <subcellularLocation>
        <location evidence="1">Cell membrane</location>
        <topology evidence="1">Single-pass membrane protein</topology>
        <orientation evidence="1">Cytoplasmic side</orientation>
    </subcellularLocation>
</comment>
<comment type="similarity">
    <text evidence="1">Belongs to the NADPH--cytochrome P450 reductase family.</text>
</comment>
<comment type="similarity">
    <text evidence="1">In the N-terminal section; belongs to the flavodoxin family.</text>
</comment>
<comment type="similarity">
    <text evidence="1">In the C-terminal section; belongs to the flavoprotein pyridine nucleotide cytochrome reductase family.</text>
</comment>